<dbReference type="EMBL" id="AE017224">
    <property type="protein sequence ID" value="AAX75517.1"/>
    <property type="molecule type" value="Genomic_DNA"/>
</dbReference>
<dbReference type="RefSeq" id="WP_002966513.1">
    <property type="nucleotide sequence ID" value="NC_006933.1"/>
</dbReference>
<dbReference type="SMR" id="P0C525"/>
<dbReference type="EnsemblBacteria" id="AAX75517">
    <property type="protein sequence ID" value="AAX75517"/>
    <property type="gene ID" value="BruAb2_0066"/>
</dbReference>
<dbReference type="KEGG" id="bmb:BruAb2_0066"/>
<dbReference type="HOGENOM" id="CLU_008341_3_0_5"/>
<dbReference type="PRO" id="PR:P0C525"/>
<dbReference type="Proteomes" id="UP000000540">
    <property type="component" value="Chromosome II"/>
</dbReference>
<dbReference type="GO" id="GO:0005524">
    <property type="term" value="F:ATP binding"/>
    <property type="evidence" value="ECO:0007669"/>
    <property type="project" value="UniProtKB-KW"/>
</dbReference>
<dbReference type="Gene3D" id="3.40.50.300">
    <property type="entry name" value="P-loop containing nucleotide triphosphate hydrolases"/>
    <property type="match status" value="1"/>
</dbReference>
<dbReference type="InterPro" id="IPR004346">
    <property type="entry name" value="CagE_TrbE_VirB"/>
</dbReference>
<dbReference type="InterPro" id="IPR018145">
    <property type="entry name" value="CagE_TrbE_VirB_cntrl_dom"/>
</dbReference>
<dbReference type="InterPro" id="IPR027417">
    <property type="entry name" value="P-loop_NTPase"/>
</dbReference>
<dbReference type="InterPro" id="IPR043964">
    <property type="entry name" value="P-loop_TraG"/>
</dbReference>
<dbReference type="InterPro" id="IPR051162">
    <property type="entry name" value="T4SS_component"/>
</dbReference>
<dbReference type="NCBIfam" id="TIGR00929">
    <property type="entry name" value="VirB4_CagE"/>
    <property type="match status" value="1"/>
</dbReference>
<dbReference type="PANTHER" id="PTHR30121:SF12">
    <property type="entry name" value="TYPE IV SECRETION SYSTEM PROTEIN CAGE"/>
    <property type="match status" value="1"/>
</dbReference>
<dbReference type="PANTHER" id="PTHR30121">
    <property type="entry name" value="UNCHARACTERIZED PROTEIN YJGR-RELATED"/>
    <property type="match status" value="1"/>
</dbReference>
<dbReference type="Pfam" id="PF03135">
    <property type="entry name" value="CagE_TrbE_VirB"/>
    <property type="match status" value="1"/>
</dbReference>
<dbReference type="Pfam" id="PF19044">
    <property type="entry name" value="P-loop_TraG"/>
    <property type="match status" value="1"/>
</dbReference>
<dbReference type="SUPFAM" id="SSF52540">
    <property type="entry name" value="P-loop containing nucleoside triphosphate hydrolases"/>
    <property type="match status" value="1"/>
</dbReference>
<gene>
    <name type="primary">virB4</name>
    <name type="ordered locus">BruAb2_0066</name>
</gene>
<reference key="1">
    <citation type="journal article" date="2005" name="J. Bacteriol.">
        <title>Completion of the genome sequence of Brucella abortus and comparison to the highly similar genomes of Brucella melitensis and Brucella suis.</title>
        <authorList>
            <person name="Halling S.M."/>
            <person name="Peterson-Burch B.D."/>
            <person name="Bricker B.J."/>
            <person name="Zuerner R.L."/>
            <person name="Qing Z."/>
            <person name="Li L.-L."/>
            <person name="Kapur V."/>
            <person name="Alt D.P."/>
            <person name="Olsen S.C."/>
        </authorList>
    </citation>
    <scope>NUCLEOTIDE SEQUENCE [LARGE SCALE GENOMIC DNA]</scope>
    <source>
        <strain>9-941</strain>
    </source>
</reference>
<accession>P0C525</accession>
<accession>Q57A17</accession>
<accession>Q9KIS9</accession>
<comment type="similarity">
    <text evidence="2">Belongs to the TrbE/VirB4 family.</text>
</comment>
<name>VIRB4_BRUAB</name>
<protein>
    <recommendedName>
        <fullName>Type IV secretion system protein virB4</fullName>
    </recommendedName>
</protein>
<proteinExistence type="inferred from homology"/>
<organism>
    <name type="scientific">Brucella abortus biovar 1 (strain 9-941)</name>
    <dbReference type="NCBI Taxonomy" id="262698"/>
    <lineage>
        <taxon>Bacteria</taxon>
        <taxon>Pseudomonadati</taxon>
        <taxon>Pseudomonadota</taxon>
        <taxon>Alphaproteobacteria</taxon>
        <taxon>Hyphomicrobiales</taxon>
        <taxon>Brucellaceae</taxon>
        <taxon>Brucella/Ochrobactrum group</taxon>
        <taxon>Brucella</taxon>
    </lineage>
</organism>
<keyword id="KW-0067">ATP-binding</keyword>
<keyword id="KW-0547">Nucleotide-binding</keyword>
<keyword id="KW-0843">Virulence</keyword>
<feature type="chain" id="PRO_0000290169" description="Type IV secretion system protein virB4">
    <location>
        <begin position="1"/>
        <end position="831"/>
    </location>
</feature>
<feature type="binding site" evidence="1">
    <location>
        <begin position="457"/>
        <end position="464"/>
    </location>
    <ligand>
        <name>ATP</name>
        <dbReference type="ChEBI" id="CHEBI:30616"/>
    </ligand>
</feature>
<evidence type="ECO:0000255" key="1"/>
<evidence type="ECO:0000305" key="2"/>
<sequence>MGAQSKYAQQLNNERSLAPFIPFRSQVGPTTVITRDGDFVRTWRIAGLAFETQDKEKLLIRKDQLNTLFRAIASNNVALWSHNVRRRTWDHLKSFFSNPFCDALDKKYYGSFSGYRMMSNELYLTVIYRPVPAKISRLFNVAVHRSHAEILQEQQLAIRKLDEIGNQIETSLRRYGGDDGRGIEVLSTYEDKHGALCSQQLEFYNFLLSGEWQKVRVPSCPLDEYLGTGWVYAGTETIEIRTANATRYARGIDFKDYANHTEPGILNGLMYSDYEYVITQSFSFMTKRDGKEFLTRQKQRLQNTEDGSASQIMEMDIAIDQLGRGDFVMGEYHYSLLVFAEDMETVRHNTSHAMNILQDNGFLATVIATATDAAFYAQLPCNWRYRPRVAGLTSLNFAGLSCFHNFRAGKRDGNPWGQALTLLKTPSGQPAYLNFHYSKGDEDNFDKKLLGNTRIIGQSGAGKTVLMNFCLAQAQKYLHNAPMGMCNVFFDKDQGAKGTILAIGGKYLAIRNGEPTGFNPFQMEPTAGNILFLEKLVQVLVSRDGQHVTTTDESRISHAIRTVMRMRPELRRLSTVLQNVTEGSDRQDRENSVAKRLAKWCFDDGTGKRGTFWWVLDCPQDQIDFNTHSNYGFDGTDFLDNADVRTPISMYLLHRMELAIDGRRFIYWMDEAWKWVDDEAFSEFANNKQLTIRKQNGLGVFATQMPSSLLNSKVASALVQQVATEIYLPNPKADYHEYTDGFKVTNEEFDIIRSMSEESRMFLVKQGHHSMICRLELNGFDDELAILSGSSDNNELLDQVIAEVGDDPSVWLPVFQERRKARIASSKSTGR</sequence>